<name>SCX8_TITDI</name>
<accession>Q1I163</accession>
<accession>C9X4J7</accession>
<evidence type="ECO:0000250" key="1"/>
<evidence type="ECO:0000255" key="2">
    <source>
        <dbReference type="PROSITE-ProRule" id="PRU01210"/>
    </source>
</evidence>
<evidence type="ECO:0000269" key="3">
    <source>
    </source>
</evidence>
<evidence type="ECO:0000305" key="4"/>
<keyword id="KW-0027">Amidation</keyword>
<keyword id="KW-1015">Disulfide bond</keyword>
<keyword id="KW-0872">Ion channel impairing toxin</keyword>
<keyword id="KW-0528">Neurotoxin</keyword>
<keyword id="KW-0964">Secreted</keyword>
<keyword id="KW-0732">Signal</keyword>
<keyword id="KW-0800">Toxin</keyword>
<keyword id="KW-0738">Voltage-gated sodium channel impairing toxin</keyword>
<sequence>MTRFVLFLSCFFLIGMVVECKDGYLVGDDGCKMHCFTRPGHYCASECSRVKGKDGYCYAWLACYCYNMPNWAPIWNSATNRCRGRK</sequence>
<proteinExistence type="evidence at protein level"/>
<feature type="signal peptide" evidence="1">
    <location>
        <begin position="1"/>
        <end position="20"/>
    </location>
</feature>
<feature type="chain" id="PRO_0000253771" description="Toxin Td8">
    <location>
        <begin position="21"/>
        <end position="83"/>
    </location>
</feature>
<feature type="domain" description="LCN-type CS-alpha/beta" evidence="2">
    <location>
        <begin position="21"/>
        <end position="83"/>
    </location>
</feature>
<feature type="modified residue" description="Arginine amide" evidence="1">
    <location>
        <position position="83"/>
    </location>
</feature>
<feature type="disulfide bond" evidence="2">
    <location>
        <begin position="31"/>
        <end position="82"/>
    </location>
</feature>
<feature type="disulfide bond" evidence="2">
    <location>
        <begin position="35"/>
        <end position="57"/>
    </location>
</feature>
<feature type="disulfide bond" evidence="2">
    <location>
        <begin position="43"/>
        <end position="63"/>
    </location>
</feature>
<feature type="disulfide bond" evidence="2">
    <location>
        <begin position="47"/>
        <end position="65"/>
    </location>
</feature>
<feature type="sequence conflict" description="In Ref. 2; AAZ29722." evidence="4" ref="2">
    <original>V</original>
    <variation>A</variation>
    <location>
        <position position="17"/>
    </location>
</feature>
<dbReference type="EMBL" id="FN392275">
    <property type="protein sequence ID" value="CAY61922.1"/>
    <property type="molecule type" value="mRNA"/>
</dbReference>
<dbReference type="EMBL" id="DQ075243">
    <property type="protein sequence ID" value="AAZ29722.1"/>
    <property type="molecule type" value="mRNA"/>
</dbReference>
<dbReference type="SMR" id="Q1I163"/>
<dbReference type="GO" id="GO:0005576">
    <property type="term" value="C:extracellular region"/>
    <property type="evidence" value="ECO:0007669"/>
    <property type="project" value="UniProtKB-SubCell"/>
</dbReference>
<dbReference type="GO" id="GO:0019871">
    <property type="term" value="F:sodium channel inhibitor activity"/>
    <property type="evidence" value="ECO:0007669"/>
    <property type="project" value="InterPro"/>
</dbReference>
<dbReference type="GO" id="GO:0090729">
    <property type="term" value="F:toxin activity"/>
    <property type="evidence" value="ECO:0007669"/>
    <property type="project" value="UniProtKB-KW"/>
</dbReference>
<dbReference type="GO" id="GO:0006952">
    <property type="term" value="P:defense response"/>
    <property type="evidence" value="ECO:0007669"/>
    <property type="project" value="InterPro"/>
</dbReference>
<dbReference type="CDD" id="cd23106">
    <property type="entry name" value="neurotoxins_LC_scorpion"/>
    <property type="match status" value="1"/>
</dbReference>
<dbReference type="FunFam" id="3.30.30.10:FF:000002">
    <property type="entry name" value="Alpha-like toxin BmK-M1"/>
    <property type="match status" value="1"/>
</dbReference>
<dbReference type="Gene3D" id="3.30.30.10">
    <property type="entry name" value="Knottin, scorpion toxin-like"/>
    <property type="match status" value="1"/>
</dbReference>
<dbReference type="InterPro" id="IPR044062">
    <property type="entry name" value="LCN-type_CS_alpha_beta_dom"/>
</dbReference>
<dbReference type="InterPro" id="IPR003614">
    <property type="entry name" value="Scorpion_toxin-like"/>
</dbReference>
<dbReference type="InterPro" id="IPR036574">
    <property type="entry name" value="Scorpion_toxin-like_sf"/>
</dbReference>
<dbReference type="InterPro" id="IPR018218">
    <property type="entry name" value="Scorpion_toxinL"/>
</dbReference>
<dbReference type="InterPro" id="IPR002061">
    <property type="entry name" value="Scorpion_toxinL/defensin"/>
</dbReference>
<dbReference type="Pfam" id="PF00537">
    <property type="entry name" value="Toxin_3"/>
    <property type="match status" value="1"/>
</dbReference>
<dbReference type="PRINTS" id="PR00285">
    <property type="entry name" value="SCORPNTOXIN"/>
</dbReference>
<dbReference type="SMART" id="SM00505">
    <property type="entry name" value="Knot1"/>
    <property type="match status" value="1"/>
</dbReference>
<dbReference type="SUPFAM" id="SSF57095">
    <property type="entry name" value="Scorpion toxin-like"/>
    <property type="match status" value="1"/>
</dbReference>
<dbReference type="PROSITE" id="PS51863">
    <property type="entry name" value="LCN_CSAB"/>
    <property type="match status" value="1"/>
</dbReference>
<protein>
    <recommendedName>
        <fullName>Toxin Td8</fullName>
    </recommendedName>
    <alternativeName>
        <fullName>PT-beta* NaTx14.6</fullName>
    </alternativeName>
</protein>
<organism>
    <name type="scientific">Tityus discrepans</name>
    <name type="common">Venezuelan scorpion</name>
    <dbReference type="NCBI Taxonomy" id="57059"/>
    <lineage>
        <taxon>Eukaryota</taxon>
        <taxon>Metazoa</taxon>
        <taxon>Ecdysozoa</taxon>
        <taxon>Arthropoda</taxon>
        <taxon>Chelicerata</taxon>
        <taxon>Arachnida</taxon>
        <taxon>Scorpiones</taxon>
        <taxon>Buthida</taxon>
        <taxon>Buthoidea</taxon>
        <taxon>Buthidae</taxon>
        <taxon>Tityus</taxon>
    </lineage>
</organism>
<reference key="1">
    <citation type="journal article" date="2009" name="Biochimie">
        <title>Molecular cloning and nucleotide sequence analysis of genes from a cDNA library of the scorpion Tityus discrepans.</title>
        <authorList>
            <person name="D'Suze G."/>
            <person name="Schwartz E.F."/>
            <person name="Garcia-Gomez B.I."/>
            <person name="Sevcik C."/>
            <person name="Possani L.D."/>
        </authorList>
    </citation>
    <scope>NUCLEOTIDE SEQUENCE [MRNA]</scope>
    <source>
        <tissue>Venom gland</tissue>
    </source>
</reference>
<reference key="2">
    <citation type="journal article" date="2006" name="Comp. Biochem. Physiol.">
        <title>Diversity of long-chain toxins in Tityus zulianus and Tityus discrepans venoms (Scorpiones, Buthidae): molecular, immunological, and mass spectral analyses.</title>
        <authorList>
            <person name="Borges A."/>
            <person name="Garcia C.C."/>
            <person name="Lugo E."/>
            <person name="Alfonzo M.J."/>
            <person name="Jowers M.J."/>
            <person name="Op den Camp H.J.M."/>
        </authorList>
    </citation>
    <scope>NUCLEOTIDE SEQUENCE [MRNA] OF 14-86</scope>
    <scope>MASS SPECTROMETRY</scope>
    <source>
        <tissue>Venom</tissue>
        <tissue>Venom gland</tissue>
    </source>
</reference>
<reference key="3">
    <citation type="journal article" date="2012" name="PLoS ONE">
        <title>Identification and phylogenetic analysis of Tityus pachyurus and Tityus obscurus novel putative Na+-channel scorpion toxins.</title>
        <authorList>
            <person name="Guerrero-Vargas J.A."/>
            <person name="Mourao C.B."/>
            <person name="Quintero-Hernandez V."/>
            <person name="Possani L.D."/>
            <person name="Schwartz E.F."/>
        </authorList>
    </citation>
    <scope>NOMENCLATURE</scope>
</reference>
<comment type="function">
    <text evidence="1">Beta toxins bind voltage-independently at site-4 of sodium channels (Nav) and shift the voltage of activation toward more negative potentials thereby affecting sodium channel activation and promoting spontaneous and repetitive firing.</text>
</comment>
<comment type="subcellular location">
    <subcellularLocation>
        <location>Secreted</location>
    </subcellularLocation>
</comment>
<comment type="tissue specificity">
    <text>Expressed by the venom gland.</text>
</comment>
<comment type="domain">
    <text evidence="4">Has the structural arrangement of an alpha-helix connected to antiparallel beta-sheets by disulfide bonds (CS-alpha/beta).</text>
</comment>
<comment type="mass spectrometry"/>
<comment type="similarity">
    <text evidence="4">Belongs to the long (4 C-C) scorpion toxin superfamily. Sodium channel inhibitor family. Beta subfamily.</text>
</comment>